<proteinExistence type="inferred from homology"/>
<protein>
    <recommendedName>
        <fullName>Dihydrofolate reductase</fullName>
        <ecNumber>1.5.1.3</ecNumber>
    </recommendedName>
</protein>
<comment type="function">
    <text evidence="1">Key enzyme in folate metabolism. Catalyzes an essential reaction for de novo glycine and purine synthesis, and for DNA precursor synthesis (By similarity).</text>
</comment>
<comment type="catalytic activity">
    <reaction evidence="2">
        <text>(6S)-5,6,7,8-tetrahydrofolate + NADP(+) = 7,8-dihydrofolate + NADPH + H(+)</text>
        <dbReference type="Rhea" id="RHEA:15009"/>
        <dbReference type="ChEBI" id="CHEBI:15378"/>
        <dbReference type="ChEBI" id="CHEBI:57451"/>
        <dbReference type="ChEBI" id="CHEBI:57453"/>
        <dbReference type="ChEBI" id="CHEBI:57783"/>
        <dbReference type="ChEBI" id="CHEBI:58349"/>
        <dbReference type="EC" id="1.5.1.3"/>
    </reaction>
</comment>
<comment type="pathway">
    <text>Cofactor biosynthesis; tetrahydrofolate biosynthesis; 5,6,7,8-tetrahydrofolate from 7,8-dihydrofolate: step 1/1.</text>
</comment>
<comment type="similarity">
    <text evidence="3">Belongs to the dihydrofolate reductase family.</text>
</comment>
<keyword id="KW-0521">NADP</keyword>
<keyword id="KW-0554">One-carbon metabolism</keyword>
<keyword id="KW-0560">Oxidoreductase</keyword>
<keyword id="KW-1185">Reference proteome</keyword>
<dbReference type="EC" id="1.5.1.3"/>
<dbReference type="EMBL" id="AE005674">
    <property type="protein sequence ID" value="AAN41711.2"/>
    <property type="molecule type" value="Genomic_DNA"/>
</dbReference>
<dbReference type="EMBL" id="AE014073">
    <property type="protein sequence ID" value="AAP15591.1"/>
    <property type="molecule type" value="Genomic_DNA"/>
</dbReference>
<dbReference type="RefSeq" id="NP_706004.2">
    <property type="nucleotide sequence ID" value="NC_004337.2"/>
</dbReference>
<dbReference type="RefSeq" id="WP_000624375.1">
    <property type="nucleotide sequence ID" value="NZ_WPGW01000005.1"/>
</dbReference>
<dbReference type="BMRB" id="P0ABQ6"/>
<dbReference type="SMR" id="P0ABQ6"/>
<dbReference type="STRING" id="198214.SF0045"/>
<dbReference type="PaxDb" id="198214-SF0045"/>
<dbReference type="GeneID" id="1024577"/>
<dbReference type="GeneID" id="93777387"/>
<dbReference type="KEGG" id="sfl:SF0045"/>
<dbReference type="KEGG" id="sfx:S0047"/>
<dbReference type="PATRIC" id="fig|198214.7.peg.54"/>
<dbReference type="HOGENOM" id="CLU_043966_5_1_6"/>
<dbReference type="UniPathway" id="UPA00077">
    <property type="reaction ID" value="UER00158"/>
</dbReference>
<dbReference type="Proteomes" id="UP000001006">
    <property type="component" value="Chromosome"/>
</dbReference>
<dbReference type="Proteomes" id="UP000002673">
    <property type="component" value="Chromosome"/>
</dbReference>
<dbReference type="GO" id="GO:0005829">
    <property type="term" value="C:cytosol"/>
    <property type="evidence" value="ECO:0007669"/>
    <property type="project" value="TreeGrafter"/>
</dbReference>
<dbReference type="GO" id="GO:0004146">
    <property type="term" value="F:dihydrofolate reductase activity"/>
    <property type="evidence" value="ECO:0007669"/>
    <property type="project" value="UniProtKB-EC"/>
</dbReference>
<dbReference type="GO" id="GO:0050661">
    <property type="term" value="F:NADP binding"/>
    <property type="evidence" value="ECO:0007669"/>
    <property type="project" value="InterPro"/>
</dbReference>
<dbReference type="GO" id="GO:0046452">
    <property type="term" value="P:dihydrofolate metabolic process"/>
    <property type="evidence" value="ECO:0007669"/>
    <property type="project" value="TreeGrafter"/>
</dbReference>
<dbReference type="GO" id="GO:0046655">
    <property type="term" value="P:folic acid metabolic process"/>
    <property type="evidence" value="ECO:0007669"/>
    <property type="project" value="TreeGrafter"/>
</dbReference>
<dbReference type="GO" id="GO:0006730">
    <property type="term" value="P:one-carbon metabolic process"/>
    <property type="evidence" value="ECO:0007669"/>
    <property type="project" value="UniProtKB-KW"/>
</dbReference>
<dbReference type="GO" id="GO:0046654">
    <property type="term" value="P:tetrahydrofolate biosynthetic process"/>
    <property type="evidence" value="ECO:0007669"/>
    <property type="project" value="UniProtKB-UniPathway"/>
</dbReference>
<dbReference type="CDD" id="cd00209">
    <property type="entry name" value="DHFR"/>
    <property type="match status" value="1"/>
</dbReference>
<dbReference type="FunFam" id="3.40.430.10:FF:000001">
    <property type="entry name" value="Dihydrofolate reductase"/>
    <property type="match status" value="1"/>
</dbReference>
<dbReference type="Gene3D" id="3.40.430.10">
    <property type="entry name" value="Dihydrofolate Reductase, subunit A"/>
    <property type="match status" value="1"/>
</dbReference>
<dbReference type="InterPro" id="IPR012259">
    <property type="entry name" value="DHFR"/>
</dbReference>
<dbReference type="InterPro" id="IPR024072">
    <property type="entry name" value="DHFR-like_dom_sf"/>
</dbReference>
<dbReference type="InterPro" id="IPR017925">
    <property type="entry name" value="DHFR_CS"/>
</dbReference>
<dbReference type="InterPro" id="IPR001796">
    <property type="entry name" value="DHFR_dom"/>
</dbReference>
<dbReference type="NCBIfam" id="NF008037">
    <property type="entry name" value="PRK10769.1"/>
    <property type="match status" value="1"/>
</dbReference>
<dbReference type="PANTHER" id="PTHR48069">
    <property type="entry name" value="DIHYDROFOLATE REDUCTASE"/>
    <property type="match status" value="1"/>
</dbReference>
<dbReference type="PANTHER" id="PTHR48069:SF3">
    <property type="entry name" value="DIHYDROFOLATE REDUCTASE"/>
    <property type="match status" value="1"/>
</dbReference>
<dbReference type="Pfam" id="PF00186">
    <property type="entry name" value="DHFR_1"/>
    <property type="match status" value="1"/>
</dbReference>
<dbReference type="PIRSF" id="PIRSF000194">
    <property type="entry name" value="DHFR"/>
    <property type="match status" value="1"/>
</dbReference>
<dbReference type="PRINTS" id="PR00070">
    <property type="entry name" value="DHFR"/>
</dbReference>
<dbReference type="SUPFAM" id="SSF53597">
    <property type="entry name" value="Dihydrofolate reductase-like"/>
    <property type="match status" value="1"/>
</dbReference>
<dbReference type="PROSITE" id="PS00075">
    <property type="entry name" value="DHFR_1"/>
    <property type="match status" value="1"/>
</dbReference>
<dbReference type="PROSITE" id="PS51330">
    <property type="entry name" value="DHFR_2"/>
    <property type="match status" value="1"/>
</dbReference>
<feature type="chain" id="PRO_0000186404" description="Dihydrofolate reductase">
    <location>
        <begin position="1"/>
        <end position="159"/>
    </location>
</feature>
<feature type="domain" description="DHFR" evidence="2">
    <location>
        <begin position="1"/>
        <end position="158"/>
    </location>
</feature>
<feature type="binding site" evidence="1">
    <location>
        <begin position="5"/>
        <end position="7"/>
    </location>
    <ligand>
        <name>substrate</name>
    </ligand>
</feature>
<feature type="binding site" evidence="1">
    <location>
        <begin position="6"/>
        <end position="7"/>
    </location>
    <ligand>
        <name>NADP(+)</name>
        <dbReference type="ChEBI" id="CHEBI:58349"/>
    </ligand>
</feature>
<feature type="binding site" evidence="1">
    <location>
        <begin position="14"/>
        <end position="19"/>
    </location>
    <ligand>
        <name>NADP(+)</name>
        <dbReference type="ChEBI" id="CHEBI:58349"/>
    </ligand>
</feature>
<feature type="binding site" evidence="1">
    <location>
        <position position="27"/>
    </location>
    <ligand>
        <name>substrate</name>
    </ligand>
</feature>
<feature type="binding site" evidence="1">
    <location>
        <begin position="43"/>
        <end position="46"/>
    </location>
    <ligand>
        <name>NADP(+)</name>
        <dbReference type="ChEBI" id="CHEBI:58349"/>
    </ligand>
</feature>
<feature type="binding site" evidence="1">
    <location>
        <position position="57"/>
    </location>
    <ligand>
        <name>substrate</name>
    </ligand>
</feature>
<feature type="binding site" evidence="1">
    <location>
        <begin position="62"/>
        <end position="65"/>
    </location>
    <ligand>
        <name>NADP(+)</name>
        <dbReference type="ChEBI" id="CHEBI:58349"/>
    </ligand>
</feature>
<feature type="binding site" evidence="1">
    <location>
        <position position="78"/>
    </location>
    <ligand>
        <name>NADP(+)</name>
        <dbReference type="ChEBI" id="CHEBI:58349"/>
    </ligand>
</feature>
<feature type="binding site" evidence="1">
    <location>
        <begin position="94"/>
        <end position="99"/>
    </location>
    <ligand>
        <name>NADP(+)</name>
        <dbReference type="ChEBI" id="CHEBI:58349"/>
    </ligand>
</feature>
<feature type="binding site" evidence="1">
    <location>
        <position position="113"/>
    </location>
    <ligand>
        <name>substrate</name>
    </ligand>
</feature>
<organism>
    <name type="scientific">Shigella flexneri</name>
    <dbReference type="NCBI Taxonomy" id="623"/>
    <lineage>
        <taxon>Bacteria</taxon>
        <taxon>Pseudomonadati</taxon>
        <taxon>Pseudomonadota</taxon>
        <taxon>Gammaproteobacteria</taxon>
        <taxon>Enterobacterales</taxon>
        <taxon>Enterobacteriaceae</taxon>
        <taxon>Shigella</taxon>
    </lineage>
</organism>
<accession>P0ABQ6</accession>
<accession>P00379</accession>
<evidence type="ECO:0000250" key="1"/>
<evidence type="ECO:0000255" key="2">
    <source>
        <dbReference type="PROSITE-ProRule" id="PRU00660"/>
    </source>
</evidence>
<evidence type="ECO:0000305" key="3"/>
<gene>
    <name type="primary">folA</name>
    <name type="ordered locus">SF0045</name>
    <name type="ordered locus">S0047</name>
</gene>
<sequence>MISLIAALAVDRVIGMENAMPWNLPADLAWFKRNTLNKPVIMGRHTWESIGRPLPGRKNIILSSQPGTDDRVTWVKSVDEAIAACGDVPEIMVIGGGRVYEQFLPKAQKLYLTHIDAEVEGDTHFPDYEPDDWESVFSEFHDADAQNSHSYCFEILERR</sequence>
<name>DYR_SHIFL</name>
<reference key="1">
    <citation type="journal article" date="2002" name="Nucleic Acids Res.">
        <title>Genome sequence of Shigella flexneri 2a: insights into pathogenicity through comparison with genomes of Escherichia coli K12 and O157.</title>
        <authorList>
            <person name="Jin Q."/>
            <person name="Yuan Z."/>
            <person name="Xu J."/>
            <person name="Wang Y."/>
            <person name="Shen Y."/>
            <person name="Lu W."/>
            <person name="Wang J."/>
            <person name="Liu H."/>
            <person name="Yang J."/>
            <person name="Yang F."/>
            <person name="Zhang X."/>
            <person name="Zhang J."/>
            <person name="Yang G."/>
            <person name="Wu H."/>
            <person name="Qu D."/>
            <person name="Dong J."/>
            <person name="Sun L."/>
            <person name="Xue Y."/>
            <person name="Zhao A."/>
            <person name="Gao Y."/>
            <person name="Zhu J."/>
            <person name="Kan B."/>
            <person name="Ding K."/>
            <person name="Chen S."/>
            <person name="Cheng H."/>
            <person name="Yao Z."/>
            <person name="He B."/>
            <person name="Chen R."/>
            <person name="Ma D."/>
            <person name="Qiang B."/>
            <person name="Wen Y."/>
            <person name="Hou Y."/>
            <person name="Yu J."/>
        </authorList>
    </citation>
    <scope>NUCLEOTIDE SEQUENCE [LARGE SCALE GENOMIC DNA]</scope>
    <source>
        <strain>301 / Serotype 2a</strain>
    </source>
</reference>
<reference key="2">
    <citation type="journal article" date="2003" name="Infect. Immun.">
        <title>Complete genome sequence and comparative genomics of Shigella flexneri serotype 2a strain 2457T.</title>
        <authorList>
            <person name="Wei J."/>
            <person name="Goldberg M.B."/>
            <person name="Burland V."/>
            <person name="Venkatesan M.M."/>
            <person name="Deng W."/>
            <person name="Fournier G."/>
            <person name="Mayhew G.F."/>
            <person name="Plunkett G. III"/>
            <person name="Rose D.J."/>
            <person name="Darling A."/>
            <person name="Mau B."/>
            <person name="Perna N.T."/>
            <person name="Payne S.M."/>
            <person name="Runyen-Janecky L.J."/>
            <person name="Zhou S."/>
            <person name="Schwartz D.C."/>
            <person name="Blattner F.R."/>
        </authorList>
    </citation>
    <scope>NUCLEOTIDE SEQUENCE [LARGE SCALE GENOMIC DNA]</scope>
    <source>
        <strain>ATCC 700930 / 2457T / Serotype 2a</strain>
    </source>
</reference>